<protein>
    <recommendedName>
        <fullName>Immediate early response gene 2 protein</fullName>
    </recommendedName>
</protein>
<evidence type="ECO:0000250" key="1">
    <source>
        <dbReference type="UniProtKB" id="B7SXM5"/>
    </source>
</evidence>
<evidence type="ECO:0000250" key="2">
    <source>
        <dbReference type="UniProtKB" id="Q9BTL4"/>
    </source>
</evidence>
<evidence type="ECO:0000256" key="3">
    <source>
        <dbReference type="SAM" id="MobiDB-lite"/>
    </source>
</evidence>
<evidence type="ECO:0000269" key="4">
    <source>
    </source>
</evidence>
<evidence type="ECO:0000305" key="5"/>
<proteinExistence type="evidence at transcript level"/>
<feature type="chain" id="PRO_0000190437" description="Immediate early response gene 2 protein">
    <location>
        <begin position="1"/>
        <end position="221"/>
    </location>
</feature>
<feature type="region of interest" description="Disordered" evidence="3">
    <location>
        <begin position="54"/>
        <end position="156"/>
    </location>
</feature>
<feature type="compositionally biased region" description="Basic and acidic residues" evidence="3">
    <location>
        <begin position="64"/>
        <end position="77"/>
    </location>
</feature>
<feature type="compositionally biased region" description="Low complexity" evidence="3">
    <location>
        <begin position="125"/>
        <end position="136"/>
    </location>
</feature>
<feature type="modified residue" description="N-acetylmethionine" evidence="2">
    <location>
        <position position="1"/>
    </location>
</feature>
<sequence length="221" mass="24596">MEVQKEAQRIMTLSVWKMYHSRMQRGGLRLHRSLQLSLVMRSARELYLSAKVETHQPEFPPSRRALDPRLHPPREPEAAMEAATPDVEQPPEPMDTQEEVLRVQETPALCDPPPARVSRKRRSSSDLSDGSDAGLVPSKKARLEEVEGEATSEVSNRLQLPPAQTEGAFPNLARVLQRRFSSLLNCGPAVPPPTPPTCEAKPACRPADNMLNVLVRTVVAF</sequence>
<dbReference type="EMBL" id="BC061717">
    <property type="protein sequence ID" value="AAH61717.1"/>
    <property type="molecule type" value="mRNA"/>
</dbReference>
<dbReference type="RefSeq" id="NP_001009541.1">
    <property type="nucleotide sequence ID" value="NM_001009541.1"/>
</dbReference>
<dbReference type="SMR" id="Q6P7D3"/>
<dbReference type="BioGRID" id="268940">
    <property type="interactions" value="1"/>
</dbReference>
<dbReference type="FunCoup" id="Q6P7D3">
    <property type="interactions" value="185"/>
</dbReference>
<dbReference type="GlyGen" id="Q6P7D3">
    <property type="glycosylation" value="1 site"/>
</dbReference>
<dbReference type="PhosphoSitePlus" id="Q6P7D3"/>
<dbReference type="PaxDb" id="10116-ENSRNOP00000067493"/>
<dbReference type="Ensembl" id="ENSRNOT00000116299.1">
    <property type="protein sequence ID" value="ENSRNOP00000090794.1"/>
    <property type="gene ID" value="ENSRNOG00000067274.1"/>
</dbReference>
<dbReference type="GeneID" id="494344"/>
<dbReference type="KEGG" id="rno:494344"/>
<dbReference type="AGR" id="RGD:1359581"/>
<dbReference type="CTD" id="9592"/>
<dbReference type="RGD" id="1359581">
    <property type="gene designation" value="Ier2"/>
</dbReference>
<dbReference type="eggNOG" id="ENOG502S19F">
    <property type="taxonomic scope" value="Eukaryota"/>
</dbReference>
<dbReference type="GeneTree" id="ENSGT00900000141021"/>
<dbReference type="InParanoid" id="Q6P7D3"/>
<dbReference type="OMA" id="MVMRSAR"/>
<dbReference type="OrthoDB" id="86298at9989"/>
<dbReference type="PhylomeDB" id="Q6P7D3"/>
<dbReference type="TreeFam" id="TF331376"/>
<dbReference type="PRO" id="PR:Q6P7D3"/>
<dbReference type="Proteomes" id="UP000002494">
    <property type="component" value="Chromosome 19"/>
</dbReference>
<dbReference type="GO" id="GO:0005737">
    <property type="term" value="C:cytoplasm"/>
    <property type="evidence" value="ECO:0000250"/>
    <property type="project" value="UniProtKB"/>
</dbReference>
<dbReference type="GO" id="GO:0005654">
    <property type="term" value="C:nucleoplasm"/>
    <property type="evidence" value="ECO:0007669"/>
    <property type="project" value="Ensembl"/>
</dbReference>
<dbReference type="GO" id="GO:0005634">
    <property type="term" value="C:nucleus"/>
    <property type="evidence" value="ECO:0000250"/>
    <property type="project" value="UniProtKB"/>
</dbReference>
<dbReference type="GO" id="GO:0048870">
    <property type="term" value="P:cell motility"/>
    <property type="evidence" value="ECO:0000250"/>
    <property type="project" value="UniProtKB"/>
</dbReference>
<dbReference type="GO" id="GO:0030182">
    <property type="term" value="P:neuron differentiation"/>
    <property type="evidence" value="ECO:0000314"/>
    <property type="project" value="UniProtKB"/>
</dbReference>
<dbReference type="GO" id="GO:0045944">
    <property type="term" value="P:positive regulation of transcription by RNA polymerase II"/>
    <property type="evidence" value="ECO:0000266"/>
    <property type="project" value="RGD"/>
</dbReference>
<dbReference type="GO" id="GO:0071774">
    <property type="term" value="P:response to fibroblast growth factor"/>
    <property type="evidence" value="ECO:0000314"/>
    <property type="project" value="UniProtKB"/>
</dbReference>
<dbReference type="InterPro" id="IPR008653">
    <property type="entry name" value="IER"/>
</dbReference>
<dbReference type="PANTHER" id="PTHR15895">
    <property type="entry name" value="IMMEDIATE EARLY RESPONSE GENE"/>
    <property type="match status" value="1"/>
</dbReference>
<dbReference type="Pfam" id="PF05760">
    <property type="entry name" value="IER"/>
    <property type="match status" value="1"/>
</dbReference>
<accession>Q6P7D3</accession>
<gene>
    <name type="primary">Ier2</name>
</gene>
<keyword id="KW-0007">Acetylation</keyword>
<keyword id="KW-0963">Cytoplasm</keyword>
<keyword id="KW-0539">Nucleus</keyword>
<keyword id="KW-1185">Reference proteome</keyword>
<reference key="1">
    <citation type="journal article" date="2004" name="Genome Res.">
        <title>The status, quality, and expansion of the NIH full-length cDNA project: the Mammalian Gene Collection (MGC).</title>
        <authorList>
            <consortium name="The MGC Project Team"/>
        </authorList>
    </citation>
    <scope>NUCLEOTIDE SEQUENCE [LARGE SCALE MRNA]</scope>
    <source>
        <tissue>Prostate</tissue>
    </source>
</reference>
<reference key="2">
    <citation type="journal article" date="2007" name="J. Neurochem.">
        <title>JNK- and Rac1-dependent induction of immediate early gene pip92 suppresses neuronal differentiation.</title>
        <authorList>
            <person name="Park J.B."/>
            <person name="Kim E.J."/>
            <person name="Yang E.J."/>
            <person name="Seo S.R."/>
            <person name="Chung K.C."/>
        </authorList>
    </citation>
    <scope>FUNCTION</scope>
    <scope>INDUCTION BY FGF</scope>
</reference>
<organism>
    <name type="scientific">Rattus norvegicus</name>
    <name type="common">Rat</name>
    <dbReference type="NCBI Taxonomy" id="10116"/>
    <lineage>
        <taxon>Eukaryota</taxon>
        <taxon>Metazoa</taxon>
        <taxon>Chordata</taxon>
        <taxon>Craniata</taxon>
        <taxon>Vertebrata</taxon>
        <taxon>Euteleostomi</taxon>
        <taxon>Mammalia</taxon>
        <taxon>Eutheria</taxon>
        <taxon>Euarchontoglires</taxon>
        <taxon>Glires</taxon>
        <taxon>Rodentia</taxon>
        <taxon>Myomorpha</taxon>
        <taxon>Muroidea</taxon>
        <taxon>Muridae</taxon>
        <taxon>Murinae</taxon>
        <taxon>Rattus</taxon>
    </lineage>
</organism>
<comment type="function">
    <text evidence="1 2 4">DNA-binding protein that seems to act as a transcription factor (By similarity). Involved in the regulation of neuronal differentiation, acts upon JNK-signaling pathway activation and plays a role in neurite outgrowth in hippocampal cells (PubMed:17156131). May mediate with FIBP FGF-signaling in the establishment of laterality in the embryo (By similarity). Promotes cell motility, seems to stimulate tumor metastasis (By similarity).</text>
</comment>
<comment type="subcellular location">
    <subcellularLocation>
        <location evidence="2">Cytoplasm</location>
    </subcellularLocation>
    <subcellularLocation>
        <location evidence="2">Nucleus</location>
    </subcellularLocation>
    <text evidence="2">Cytoplasmic during quiescence, translocates to the nucleus upon stimulation.</text>
</comment>
<comment type="induction">
    <text evidence="4">Induced by basic fibroblast growth factor (bFGF).</text>
</comment>
<comment type="similarity">
    <text evidence="5">Belongs to the IER family.</text>
</comment>
<name>IER2_RAT</name>